<proteinExistence type="inferred from homology"/>
<organism>
    <name type="scientific">Chlamydia trachomatis serovar D (strain ATCC VR-885 / DSM 19411 / UW-3/Cx)</name>
    <dbReference type="NCBI Taxonomy" id="272561"/>
    <lineage>
        <taxon>Bacteria</taxon>
        <taxon>Pseudomonadati</taxon>
        <taxon>Chlamydiota</taxon>
        <taxon>Chlamydiia</taxon>
        <taxon>Chlamydiales</taxon>
        <taxon>Chlamydiaceae</taxon>
        <taxon>Chlamydia/Chlamydophila group</taxon>
        <taxon>Chlamydia</taxon>
    </lineage>
</organism>
<comment type="catalytic activity">
    <reaction>
        <text>tRNA(Gly) + glycine + ATP = glycyl-tRNA(Gly) + AMP + diphosphate</text>
        <dbReference type="Rhea" id="RHEA:16013"/>
        <dbReference type="Rhea" id="RHEA-COMP:9664"/>
        <dbReference type="Rhea" id="RHEA-COMP:9683"/>
        <dbReference type="ChEBI" id="CHEBI:30616"/>
        <dbReference type="ChEBI" id="CHEBI:33019"/>
        <dbReference type="ChEBI" id="CHEBI:57305"/>
        <dbReference type="ChEBI" id="CHEBI:78442"/>
        <dbReference type="ChEBI" id="CHEBI:78522"/>
        <dbReference type="ChEBI" id="CHEBI:456215"/>
        <dbReference type="EC" id="6.1.1.14"/>
    </reaction>
</comment>
<comment type="subcellular location">
    <subcellularLocation>
        <location evidence="1">Cytoplasm</location>
    </subcellularLocation>
</comment>
<comment type="similarity">
    <text evidence="2">Belongs to the class-II aminoacyl-tRNA synthetase family.</text>
</comment>
<sequence length="1003" mass="112577">MSSQPLTLQTMMAAILNFWSEQGCIIHQGYDLEVGAGTFNPATFLQSLGPEPFRTAYIEPSRRPQDGRYGQHPNRLQKYHQLQVILKPVPENFLSLYLESLKVIGLNLVDHDIRFVHDDWENPTIGAWGLGWEVWLNGMEITQLTYFQAVGSKPLDAISGEITYGVERIAMYLQKKNSVYDVMWNDSLTYGDITQYAEQAWSQYNFETANTTMWLKHFDDFSAEALATLDQGLPLPAYDFVIKASHAFNMLDSRGVISVTERTRYIAKIRQLARAAADKYVAWRESLGFPLLKTPPSTPTVTPKKIPTICQPEDFLLEIGSEELPATFVPTGIQQLESLAKKLLADHGIAYKHLEVLGTPRRLALCIEGLSHVTIRPESEKKGPPLSLLFMTDGSVSPQGEQFFSSHGLSISHRSALDQPSAIWRVRSINGTDYLFLVIPEERKETAAILVNELPQLIRSIRFPQKMTWDNGGVEYARPIRWLVALYGDQILPISLGFVSSGNTSWGHRQLDNRQLTIPSSNMYVDTLRSACVIVSQKERRAIIKQGLQNLTGDQIVAIAPEHLIDETVFLTEHPFVISAQFDPAFCSLPKELLIAEMIQHQRYFPTQNMQGEITNRFLIVCDNSPTDSIVEGNEKALAPRLTDGNFLFKQDLLTPLSSFVEKLKSVTYFESLGSLADKTSRLKLHLEEAYALLPLCAKEDIDTAIHYCKADLVSSVVNEFPELQGIMGRYYLQNASLSRAAALAIGEHLQHITLGSSISTTGALLSILDRIDNLLSCFILGLLPTSSHDPYALRRQSLEILTLLYTTQSSVDIEDLFARLIRHFPSSIPNTVWSPEAVLSKLNTFVWGRLRTILSSLGFDKEVIATVLTDNCPKNPLTIIQSAQSIQELKNTQILKTIAAMYNRLKKILASLSFSVTEQMFSLQSAEDLLFKQALDRFVEETTALPISSKDYLHLLKELAQSTELFLDSVRVASDDESTRNQRIALLIAAQKCFGFYAWGVL</sequence>
<name>SYG_CHLTR</name>
<gene>
    <name type="primary">glyQS</name>
    <name type="synonym">glyQ</name>
    <name type="synonym">glyS</name>
    <name type="ordered locus">CT_796</name>
</gene>
<keyword id="KW-0030">Aminoacyl-tRNA synthetase</keyword>
<keyword id="KW-0067">ATP-binding</keyword>
<keyword id="KW-0963">Cytoplasm</keyword>
<keyword id="KW-0436">Ligase</keyword>
<keyword id="KW-0547">Nucleotide-binding</keyword>
<keyword id="KW-0648">Protein biosynthesis</keyword>
<keyword id="KW-1185">Reference proteome</keyword>
<dbReference type="EC" id="6.1.1.14"/>
<dbReference type="EMBL" id="AE001273">
    <property type="protein sequence ID" value="AAC68391.1"/>
    <property type="molecule type" value="Genomic_DNA"/>
</dbReference>
<dbReference type="PIR" id="B71469">
    <property type="entry name" value="B71469"/>
</dbReference>
<dbReference type="RefSeq" id="NP_220316.1">
    <property type="nucleotide sequence ID" value="NC_000117.1"/>
</dbReference>
<dbReference type="RefSeq" id="WP_010725349.1">
    <property type="nucleotide sequence ID" value="NC_000117.1"/>
</dbReference>
<dbReference type="SMR" id="P0CE22"/>
<dbReference type="FunCoup" id="P0CE22">
    <property type="interactions" value="239"/>
</dbReference>
<dbReference type="STRING" id="272561.CT_796"/>
<dbReference type="EnsemblBacteria" id="AAC68391">
    <property type="protein sequence ID" value="AAC68391"/>
    <property type="gene ID" value="CT_796"/>
</dbReference>
<dbReference type="GeneID" id="884595"/>
<dbReference type="KEGG" id="ctr:CT_796"/>
<dbReference type="PATRIC" id="fig|272561.5.peg.875"/>
<dbReference type="HOGENOM" id="CLU_007220_1_1_0"/>
<dbReference type="InParanoid" id="P0CE22"/>
<dbReference type="OrthoDB" id="9775440at2"/>
<dbReference type="Proteomes" id="UP000000431">
    <property type="component" value="Chromosome"/>
</dbReference>
<dbReference type="GO" id="GO:0005829">
    <property type="term" value="C:cytosol"/>
    <property type="evidence" value="ECO:0000318"/>
    <property type="project" value="GO_Central"/>
</dbReference>
<dbReference type="GO" id="GO:0004814">
    <property type="term" value="F:arginine-tRNA ligase activity"/>
    <property type="evidence" value="ECO:0007669"/>
    <property type="project" value="InterPro"/>
</dbReference>
<dbReference type="GO" id="GO:0005524">
    <property type="term" value="F:ATP binding"/>
    <property type="evidence" value="ECO:0007669"/>
    <property type="project" value="UniProtKB-UniRule"/>
</dbReference>
<dbReference type="GO" id="GO:0004820">
    <property type="term" value="F:glycine-tRNA ligase activity"/>
    <property type="evidence" value="ECO:0007669"/>
    <property type="project" value="UniProtKB-UniRule"/>
</dbReference>
<dbReference type="GO" id="GO:0006420">
    <property type="term" value="P:arginyl-tRNA aminoacylation"/>
    <property type="evidence" value="ECO:0007669"/>
    <property type="project" value="InterPro"/>
</dbReference>
<dbReference type="GO" id="GO:0006426">
    <property type="term" value="P:glycyl-tRNA aminoacylation"/>
    <property type="evidence" value="ECO:0007669"/>
    <property type="project" value="UniProtKB-UniRule"/>
</dbReference>
<dbReference type="CDD" id="cd00733">
    <property type="entry name" value="GlyRS_alpha_core"/>
    <property type="match status" value="1"/>
</dbReference>
<dbReference type="FunFam" id="3.30.930.10:FF:000006">
    <property type="entry name" value="Glycine--tRNA ligase alpha subunit"/>
    <property type="match status" value="1"/>
</dbReference>
<dbReference type="Gene3D" id="3.30.930.10">
    <property type="entry name" value="Bira Bifunctional Protein, Domain 2"/>
    <property type="match status" value="1"/>
</dbReference>
<dbReference type="Gene3D" id="1.20.58.180">
    <property type="entry name" value="Class II aaRS and biotin synthetases, domain 2"/>
    <property type="match status" value="1"/>
</dbReference>
<dbReference type="HAMAP" id="MF_00254">
    <property type="entry name" value="Gly_tRNA_synth_alpha"/>
    <property type="match status" value="1"/>
</dbReference>
<dbReference type="HAMAP" id="MF_00255">
    <property type="entry name" value="Gly_tRNA_synth_beta"/>
    <property type="match status" value="1"/>
</dbReference>
<dbReference type="InterPro" id="IPR045864">
    <property type="entry name" value="aa-tRNA-synth_II/BPL/LPL"/>
</dbReference>
<dbReference type="InterPro" id="IPR008909">
    <property type="entry name" value="DALR_anticod-bd"/>
</dbReference>
<dbReference type="InterPro" id="IPR015944">
    <property type="entry name" value="Gly-tRNA-synth_bsu"/>
</dbReference>
<dbReference type="InterPro" id="IPR006194">
    <property type="entry name" value="Gly-tRNA-synth_heterodimer"/>
</dbReference>
<dbReference type="InterPro" id="IPR002310">
    <property type="entry name" value="Gly-tRNA_ligase_asu"/>
</dbReference>
<dbReference type="NCBIfam" id="TIGR00388">
    <property type="entry name" value="glyQ"/>
    <property type="match status" value="1"/>
</dbReference>
<dbReference type="NCBIfam" id="TIGR00211">
    <property type="entry name" value="glyS"/>
    <property type="match status" value="1"/>
</dbReference>
<dbReference type="NCBIfam" id="NF006827">
    <property type="entry name" value="PRK09348.1"/>
    <property type="match status" value="1"/>
</dbReference>
<dbReference type="NCBIfam" id="NF011499">
    <property type="entry name" value="PRK14908.1"/>
    <property type="match status" value="1"/>
</dbReference>
<dbReference type="PANTHER" id="PTHR30075:SF2">
    <property type="entry name" value="GLYCINE--TRNA LIGASE, CHLOROPLASTIC_MITOCHONDRIAL 2"/>
    <property type="match status" value="1"/>
</dbReference>
<dbReference type="PANTHER" id="PTHR30075">
    <property type="entry name" value="GLYCYL-TRNA SYNTHETASE"/>
    <property type="match status" value="1"/>
</dbReference>
<dbReference type="Pfam" id="PF05746">
    <property type="entry name" value="DALR_1"/>
    <property type="match status" value="1"/>
</dbReference>
<dbReference type="Pfam" id="PF02091">
    <property type="entry name" value="tRNA-synt_2e"/>
    <property type="match status" value="1"/>
</dbReference>
<dbReference type="Pfam" id="PF02092">
    <property type="entry name" value="tRNA_synt_2f"/>
    <property type="match status" value="1"/>
</dbReference>
<dbReference type="PRINTS" id="PR01044">
    <property type="entry name" value="TRNASYNTHGA"/>
</dbReference>
<dbReference type="SUPFAM" id="SSF55681">
    <property type="entry name" value="Class II aaRS and biotin synthetases"/>
    <property type="match status" value="1"/>
</dbReference>
<dbReference type="PROSITE" id="PS50861">
    <property type="entry name" value="AA_TRNA_LIGASE_II_GLYAB"/>
    <property type="match status" value="2"/>
</dbReference>
<evidence type="ECO:0000250" key="1"/>
<evidence type="ECO:0000305" key="2"/>
<reference key="1">
    <citation type="journal article" date="1998" name="Science">
        <title>Genome sequence of an obligate intracellular pathogen of humans: Chlamydia trachomatis.</title>
        <authorList>
            <person name="Stephens R.S."/>
            <person name="Kalman S."/>
            <person name="Lammel C.J."/>
            <person name="Fan J."/>
            <person name="Marathe R."/>
            <person name="Aravind L."/>
            <person name="Mitchell W.P."/>
            <person name="Olinger L."/>
            <person name="Tatusov R.L."/>
            <person name="Zhao Q."/>
            <person name="Koonin E.V."/>
            <person name="Davis R.W."/>
        </authorList>
    </citation>
    <scope>NUCLEOTIDE SEQUENCE [LARGE SCALE GENOMIC DNA]</scope>
    <source>
        <strain>ATCC VR-885 / DSM 19411 / UW-3/Cx</strain>
    </source>
</reference>
<feature type="chain" id="PRO_0000072890" description="Glycine--tRNA ligase">
    <location>
        <begin position="1"/>
        <end position="1003"/>
    </location>
</feature>
<feature type="region of interest" description="Glycine--tRNA ligase alpha subunit">
    <location>
        <begin position="1"/>
        <end position="310"/>
    </location>
</feature>
<feature type="region of interest" description="Glycine--tRNA ligase beta subunit">
    <location>
        <begin position="311"/>
        <end position="1003"/>
    </location>
</feature>
<protein>
    <recommendedName>
        <fullName>Glycine--tRNA ligase</fullName>
    </recommendedName>
    <alternativeName>
        <fullName>Glycyl-tRNA synthetase</fullName>
        <shortName>GlyRS</shortName>
        <ecNumber>6.1.1.14</ecNumber>
    </alternativeName>
    <domain>
        <recommendedName>
            <fullName>Glycine--tRNA ligase alpha subunit</fullName>
        </recommendedName>
        <alternativeName>
            <fullName>Glycyl-tRNA synthetase alpha subunit</fullName>
        </alternativeName>
    </domain>
    <domain>
        <recommendedName>
            <fullName>Glycine--tRNA ligase beta subunit</fullName>
        </recommendedName>
        <alternativeName>
            <fullName>Glycyl-tRNA synthetase beta subunit</fullName>
        </alternativeName>
    </domain>
</protein>
<accession>P0CE22</accession>
<accession>O84802</accession>
<accession>Q46371</accession>